<protein>
    <recommendedName>
        <fullName evidence="1">Spike glycoprotein</fullName>
        <shortName evidence="1">S glycoprotein</shortName>
    </recommendedName>
    <alternativeName>
        <fullName evidence="1">E2</fullName>
    </alternativeName>
    <alternativeName>
        <fullName evidence="1">Peplomer protein</fullName>
    </alternativeName>
    <component>
        <recommendedName>
            <fullName evidence="1">Spike protein S1</fullName>
        </recommendedName>
    </component>
    <component>
        <recommendedName>
            <fullName evidence="1">Spike protein S2</fullName>
        </recommendedName>
    </component>
    <component>
        <recommendedName>
            <fullName evidence="1">Spike protein S2'</fullName>
        </recommendedName>
    </component>
</protein>
<gene>
    <name evidence="1" type="primary">S</name>
    <name type="ORF">2</name>
</gene>
<sequence>MLVTPLLLVTLLCALCSAVLYDSSSYVYYYQSAFRPPSGWHLQGGAYAVVNISSEFNNAGSSSGCTVGIIHGGRVVNASSIAMTAPSSGMAWSSSQFCTAHCNFSDTTVFVTHCYKHGGCPLTGMLQQNLIRVSAMKNGQLFYNLTVSVAKYPTFRSFQCVNNLTSVYLNGDLVYTSNETIDVTSAGVYFKAGGPITYKVMREVKALAYFVNGTAQDVILCDGSPRGLLACQYNTGNFSDGFYPFTNSSLVKQKFIVYRENSVNTTCTLHNFIFHNETGANPNPSGVQNIQTYQTKTAQSGYYNFNFSFLSSFVYKESNFMYGSYHPSCKFRLETINNGLWFNSLSVSIAYGPLQGGCKQSVFKGRATCCYAYSYGGPSLCKGVYSGELDHNFECGLLVYVTKSGGSRIQTATEPPVITQNNYNNITLNTCVDYNIYGRTGQGFITNVTDSAVSYNYLADAGLAILDTSGSIDIFVVQGEYGLNYYKVNPCEDVNQQFVVSGGKLVGILTSRNETGSQLLENQFYIKITNGTRRFRRSITENVANCPYVSYGKFCIKPDGSIATIVPKQLEQFVAPLFNVTENVLIPNSFNLTVTDEYIQTRMDKVQINCLQYVCGSSLDCRKLFQQYGPVCDNILSVVNSVGQKEDMELLNFYSSTKPAGFNTPVLSNVSTGEFNISLLLTNPSSRRKRSLIEDLLFTSVESVGLPTNDAYKNCTAGPLGFFKDLACAREYNGLLVLPPIITAEMQALYTSSLVASMAFGGITAAGAIPFATQLQARINHLGITQSLLLKNQEKIAASFNKAIGHMQEGFRSTSLALQQIQDVVSKQSAILTETMASLNKNFGAISSVIQEIYQQFDAIQANAQVDRLITGRLSSLSVLASAKQAEYIRVSQQRELATQKINECVKSQSIRYSFCGNGRHVLTIPQNAPNGIVFIHFSYTPDSFVNVTAIVGFCVKPANASQYAIVPANGRGIFIQVNGSYYITARDMYMPRAITAGDVVTLTSCQANYVSVNKTVITTFVDNDDFDFNDELSKWWNDTKHELPDFDKFNYTVPILDIDSEIDRIQGVIQGLNDSLIDLEKLSILKTYIKWPWYVWLAIAFATIIFILILGWVFFMTGCCGCCCGCFGIMPLMSKCGKKSSYYTTFDNDVVTEQYRPKKSV</sequence>
<reference key="1">
    <citation type="journal article" date="1985" name="J. Gen. Virol.">
        <title>Cloning and sequencing of the gene encoding the spike protein of the coronavirus IBV.</title>
        <authorList>
            <person name="Binns M.M."/>
            <person name="Boursnell M.E.G."/>
            <person name="Cavanagh D."/>
            <person name="Pappin D.J.C."/>
            <person name="Brown T.D.K."/>
        </authorList>
    </citation>
    <scope>NUCLEOTIDE SEQUENCE [GENOMIC RNA]</scope>
</reference>
<reference key="2">
    <citation type="journal article" date="1986" name="J. Gen. Virol.">
        <title>Comparison of the spike precursor sequences of coronavirus IBV strains M41 and 6/82 with that of IBV Beaudette.</title>
        <authorList>
            <person name="Binns M.M."/>
            <person name="Boursnell M.E.G."/>
            <person name="Tomley F.M."/>
            <person name="Brown T.D.K."/>
        </authorList>
    </citation>
    <scope>NUCLEOTIDE SEQUENCE [GENOMIC RNA]</scope>
</reference>
<reference key="3">
    <citation type="journal article" date="2005" name="Biochem. Biophys. Res. Commun.">
        <title>Selection of and recombination between minor variants lead to the adaptation of an avian coronavirus to primate cells.</title>
        <authorList>
            <person name="Fang S.G."/>
            <person name="Shen S."/>
            <person name="Tay F.P."/>
            <person name="Liu D.X."/>
        </authorList>
    </citation>
    <scope>NUCLEOTIDE SEQUENCE [GENOMIC RNA / MRNA]</scope>
    <source>
        <strain>Isolate Vero cell-adapted p36</strain>
        <strain>Isolate Vero cell-adapted p65</strain>
    </source>
</reference>
<reference key="4">
    <citation type="journal article" date="2004" name="J. Virol.">
        <title>Intracellular targeting signals contribute to localization of coronavirus spike proteins near the virus assembly site.</title>
        <authorList>
            <person name="Lontok E."/>
            <person name="Corse E."/>
            <person name="Machamer C.E."/>
        </authorList>
    </citation>
    <scope>SUBCELLULAR LOCATION</scope>
    <scope>DI-LYSINE MOTIF</scope>
    <scope>MUTAGENESIS OF LYS-1159 AND LYS-1160</scope>
    <source>
        <strain>Isolate Vero cell-adapted p65</strain>
    </source>
</reference>
<reference key="5">
    <citation type="journal article" date="2006" name="J. Virol.">
        <title>The avian coronavirus infectious bronchitis virus undergoes direct low-pH-dependent fusion activation during entry into host cells.</title>
        <authorList>
            <person name="Chu V.C."/>
            <person name="McElroy L.J."/>
            <person name="Chu V."/>
            <person name="Bauman B.E."/>
            <person name="Whittaker G.R."/>
        </authorList>
    </citation>
    <scope>FUNCTION OF SPIKE PROTEIN S2</scope>
</reference>
<reference key="6">
    <citation type="journal article" date="2009" name="J. Virol.">
        <title>Proteolytic activation of the spike protein at a novel RRRR/S motif is implicated in furin-dependent entry, syncytium formation, and infectivity of coronavirus infectious bronchitis virus in cultured cells.</title>
        <authorList>
            <person name="Yamada Y."/>
            <person name="Liu D.X."/>
        </authorList>
    </citation>
    <scope>CLEAVAGE</scope>
</reference>
<reference key="7">
    <citation type="journal article" date="2014" name="Virology">
        <title>Mapping of the receptor-binding domain and amino acids critical for attachment in the spike protein of avian coronavirus infectious bronchitis virus.</title>
        <authorList>
            <person name="Promkuntod N."/>
            <person name="van Eijndhoven R.E."/>
            <person name="de Vrieze G."/>
            <person name="Groene A."/>
            <person name="Verheije M.H."/>
        </authorList>
    </citation>
    <scope>FUNCTION</scope>
    <source>
        <strain>M41</strain>
    </source>
</reference>
<reference key="8">
    <citation type="journal article" date="2018" name="Virology">
        <title>Identification of N-linked glycosylation sites in the spike protein and their functional impact on the replication and infectivity of coronavirus infectious bronchitis virus in cell culture.</title>
        <authorList>
            <person name="Zheng J."/>
            <person name="Yamada Y."/>
            <person name="Fung T.S."/>
            <person name="Huang M."/>
            <person name="Chia R."/>
            <person name="Liu D.X."/>
        </authorList>
    </citation>
    <scope>GLYCOSYLATION AT ASN-212; ASN-237; ASN-247; ASN-276; ASN-513; ASN-591; ASN-1051 AND ASN-1074</scope>
</reference>
<proteinExistence type="evidence at protein level"/>
<name>SPIKE_IBVB</name>
<accession>P11223</accession>
<accession>P05134</accession>
<accession>Q4ZJS1</accession>
<keyword id="KW-0165">Cleavage on pair of basic residues</keyword>
<keyword id="KW-0175">Coiled coil</keyword>
<keyword id="KW-1170">Fusion of virus membrane with host endosomal membrane</keyword>
<keyword id="KW-1168">Fusion of virus membrane with host membrane</keyword>
<keyword id="KW-0325">Glycoprotein</keyword>
<keyword id="KW-1043">Host membrane</keyword>
<keyword id="KW-0945">Host-virus interaction</keyword>
<keyword id="KW-0472">Membrane</keyword>
<keyword id="KW-1185">Reference proteome</keyword>
<keyword id="KW-0732">Signal</keyword>
<keyword id="KW-0812">Transmembrane</keyword>
<keyword id="KW-1133">Transmembrane helix</keyword>
<keyword id="KW-1161">Viral attachment to host cell</keyword>
<keyword id="KW-0261">Viral envelope protein</keyword>
<keyword id="KW-1162">Viral penetration into host cytoplasm</keyword>
<keyword id="KW-0946">Virion</keyword>
<keyword id="KW-0843">Virulence</keyword>
<keyword id="KW-1164">Virus endocytosis by host</keyword>
<keyword id="KW-1160">Virus entry into host cell</keyword>
<organism>
    <name type="scientific">Avian infectious bronchitis virus (strain Beaudette)</name>
    <name type="common">IBV</name>
    <dbReference type="NCBI Taxonomy" id="11122"/>
    <lineage>
        <taxon>Viruses</taxon>
        <taxon>Riboviria</taxon>
        <taxon>Orthornavirae</taxon>
        <taxon>Pisuviricota</taxon>
        <taxon>Pisoniviricetes</taxon>
        <taxon>Nidovirales</taxon>
        <taxon>Cornidovirineae</taxon>
        <taxon>Coronaviridae</taxon>
        <taxon>Orthocoronavirinae</taxon>
        <taxon>Gammacoronavirus</taxon>
        <taxon>Igacovirus</taxon>
        <taxon>Avian coronavirus</taxon>
    </lineage>
</organism>
<dbReference type="EMBL" id="M95169">
    <property type="protein sequence ID" value="AAA70235.1"/>
    <property type="molecule type" value="Genomic_RNA"/>
</dbReference>
<dbReference type="EMBL" id="X02342">
    <property type="protein sequence ID" value="CAA26201.1"/>
    <property type="molecule type" value="Genomic_RNA"/>
</dbReference>
<dbReference type="EMBL" id="DQ001342">
    <property type="protein sequence ID" value="AAY21248.1"/>
    <property type="molecule type" value="mRNA"/>
</dbReference>
<dbReference type="EMBL" id="DQ001339">
    <property type="protein sequence ID" value="AAY24433.1"/>
    <property type="molecule type" value="Genomic_RNA"/>
</dbReference>
<dbReference type="PIR" id="S14939">
    <property type="entry name" value="S14939"/>
</dbReference>
<dbReference type="RefSeq" id="NP_040831.1">
    <property type="nucleotide sequence ID" value="NC_001451.1"/>
</dbReference>
<dbReference type="SMR" id="P11223"/>
<dbReference type="ELM" id="P11223"/>
<dbReference type="IntAct" id="P11223">
    <property type="interactions" value="1"/>
</dbReference>
<dbReference type="GlyCosmos" id="P11223">
    <property type="glycosylation" value="28 sites, No reported glycans"/>
</dbReference>
<dbReference type="iPTMnet" id="P11223"/>
<dbReference type="GeneID" id="1489741"/>
<dbReference type="KEGG" id="vg:1489741"/>
<dbReference type="Proteomes" id="UP000006717">
    <property type="component" value="Segment"/>
</dbReference>
<dbReference type="Proteomes" id="UP000180342">
    <property type="component" value="Genome"/>
</dbReference>
<dbReference type="GO" id="GO:0044173">
    <property type="term" value="C:host cell endoplasmic reticulum-Golgi intermediate compartment membrane"/>
    <property type="evidence" value="ECO:0007669"/>
    <property type="project" value="UniProtKB-SubCell"/>
</dbReference>
<dbReference type="GO" id="GO:0016020">
    <property type="term" value="C:membrane"/>
    <property type="evidence" value="ECO:0007669"/>
    <property type="project" value="UniProtKB-KW"/>
</dbReference>
<dbReference type="GO" id="GO:0019031">
    <property type="term" value="C:viral envelope"/>
    <property type="evidence" value="ECO:0007669"/>
    <property type="project" value="UniProtKB-KW"/>
</dbReference>
<dbReference type="GO" id="GO:0055036">
    <property type="term" value="C:virion membrane"/>
    <property type="evidence" value="ECO:0007669"/>
    <property type="project" value="UniProtKB-SubCell"/>
</dbReference>
<dbReference type="GO" id="GO:0075509">
    <property type="term" value="P:endocytosis involved in viral entry into host cell"/>
    <property type="evidence" value="ECO:0007669"/>
    <property type="project" value="UniProtKB-KW"/>
</dbReference>
<dbReference type="GO" id="GO:0039654">
    <property type="term" value="P:fusion of virus membrane with host endosome membrane"/>
    <property type="evidence" value="ECO:0007669"/>
    <property type="project" value="UniProtKB-KW"/>
</dbReference>
<dbReference type="GO" id="GO:0019064">
    <property type="term" value="P:fusion of virus membrane with host plasma membrane"/>
    <property type="evidence" value="ECO:0000314"/>
    <property type="project" value="UniProtKB"/>
</dbReference>
<dbReference type="GO" id="GO:0046813">
    <property type="term" value="P:receptor-mediated virion attachment to host cell"/>
    <property type="evidence" value="ECO:0007669"/>
    <property type="project" value="InterPro"/>
</dbReference>
<dbReference type="CDD" id="cd22372">
    <property type="entry name" value="gammaCoV_Spike_SD1-2_S1-S2_S2"/>
    <property type="match status" value="1"/>
</dbReference>
<dbReference type="FunFam" id="1.20.5.300:FF:000003">
    <property type="entry name" value="Spike glycoprotein"/>
    <property type="match status" value="1"/>
</dbReference>
<dbReference type="FunFam" id="1.20.5.300:FF:000009">
    <property type="entry name" value="Spike glycoprotein"/>
    <property type="match status" value="1"/>
</dbReference>
<dbReference type="Gene3D" id="1.20.5.300">
    <property type="match status" value="2"/>
</dbReference>
<dbReference type="HAMAP" id="MF_04098">
    <property type="entry name" value="GAMMA_CORONA_SPIKE"/>
    <property type="match status" value="1"/>
</dbReference>
<dbReference type="InterPro" id="IPR043607">
    <property type="entry name" value="CoV_S1_C"/>
</dbReference>
<dbReference type="InterPro" id="IPR043473">
    <property type="entry name" value="S2_sf_CoV"/>
</dbReference>
<dbReference type="InterPro" id="IPR002552">
    <property type="entry name" value="Spike_S2_CoV"/>
</dbReference>
<dbReference type="InterPro" id="IPR043614">
    <property type="entry name" value="Spike_S2_CoV_C"/>
</dbReference>
<dbReference type="InterPro" id="IPR044873">
    <property type="entry name" value="Spike_S2_CoV_HR1"/>
</dbReference>
<dbReference type="InterPro" id="IPR044874">
    <property type="entry name" value="Spike_S2_CoV_HR2"/>
</dbReference>
<dbReference type="Pfam" id="PF19209">
    <property type="entry name" value="CoV_S1_C"/>
    <property type="match status" value="1"/>
</dbReference>
<dbReference type="Pfam" id="PF01601">
    <property type="entry name" value="CoV_S2"/>
    <property type="match status" value="1"/>
</dbReference>
<dbReference type="Pfam" id="PF19214">
    <property type="entry name" value="CoV_S2_C"/>
    <property type="match status" value="1"/>
</dbReference>
<dbReference type="SUPFAM" id="SSF111474">
    <property type="entry name" value="Coronavirus S2 glycoprotein"/>
    <property type="match status" value="2"/>
</dbReference>
<dbReference type="PROSITE" id="PS51923">
    <property type="entry name" value="COV_S2_HR1"/>
    <property type="match status" value="1"/>
</dbReference>
<dbReference type="PROSITE" id="PS51924">
    <property type="entry name" value="COV_S2_HR2"/>
    <property type="match status" value="1"/>
</dbReference>
<evidence type="ECO:0000255" key="1">
    <source>
        <dbReference type="HAMAP-Rule" id="MF_04098"/>
    </source>
</evidence>
<evidence type="ECO:0000255" key="2">
    <source>
        <dbReference type="PROSITE-ProRule" id="PRU01271"/>
    </source>
</evidence>
<evidence type="ECO:0000255" key="3">
    <source>
        <dbReference type="PROSITE-ProRule" id="PRU01272"/>
    </source>
</evidence>
<evidence type="ECO:0000269" key="4">
    <source>
    </source>
</evidence>
<evidence type="ECO:0000269" key="5">
    <source>
    </source>
</evidence>
<evidence type="ECO:0000269" key="6">
    <source>
    </source>
</evidence>
<evidence type="ECO:0000269" key="7">
    <source>
    </source>
</evidence>
<evidence type="ECO:0000269" key="8">
    <source>
    </source>
</evidence>
<comment type="function">
    <molecule>Spike protein S1</molecule>
    <text evidence="1 5 7">Attaches the virion to the host cell membrane by interacting with sialic acids, initiating the infection.</text>
</comment>
<comment type="function">
    <molecule>Spike protein S2</molecule>
    <text evidence="1">Mediates fusion of the virion and cellular membranes by acting as a class I viral fusion protein. Under the current model, the protein has at least 3 conformational states: pre-fusion native state, pre-hairpin intermediate state, and post-fusion hairpin state. During viral and target cell membrane fusion, the coiled coil regions (heptad repeats) assume a trimer-of-hairpins structure, positioning the fusion peptide in close proximity to the C-terminal region of the ectodomain. The formation of this structure appears to drive apposition and subsequent fusion of viral and target cell membranes.</text>
</comment>
<comment type="function">
    <molecule>Spike protein S2'</molecule>
    <text evidence="1">Acts as a viral fusion peptide after S2 cleavage occurring upon virus endocytosis.</text>
</comment>
<comment type="subunit">
    <text evidence="1">Homotrimer; each monomer consists of a S1 and a S2 subunit. The resulting peplomers protrude from the virus surface as spikes.</text>
</comment>
<comment type="interaction">
    <interactant intactId="EBI-25497861">
        <id>P11223</id>
    </interactant>
    <interactant intactId="EBI-711990">
        <id>O00303</id>
        <label>EIF3F</label>
    </interactant>
    <organismsDiffer>true</organismsDiffer>
    <experiments>2</experiments>
</comment>
<comment type="subcellular location">
    <molecule>Spike protein S2</molecule>
    <subcellularLocation>
        <location evidence="1">Virion membrane</location>
        <topology evidence="1">Single-pass type I membrane protein</topology>
    </subcellularLocation>
    <subcellularLocation>
        <location evidence="1">Host endoplasmic reticulum-Golgi intermediate compartment membrane</location>
        <topology evidence="1">Single-pass type I membrane protein</topology>
    </subcellularLocation>
    <text evidence="1">Accumulates in the endoplasmic reticulum-Golgi intermediate compartment, where it participates in virus particle assembly. Some S oligomers may be transported to the plasma membrane, where they may mediate cell-cell fusion.</text>
</comment>
<comment type="subcellular location">
    <molecule>Spike protein S1</molecule>
    <subcellularLocation>
        <location evidence="1">Virion membrane</location>
        <topology evidence="1">Peripheral membrane protein</topology>
    </subcellularLocation>
    <subcellularLocation>
        <location evidence="1">Host endoplasmic reticulum-Golgi intermediate compartment membrane</location>
        <topology evidence="1">Peripheral membrane protein</topology>
    </subcellularLocation>
    <text evidence="1">Accumulates in the endoplasmic reticulum-Golgi intermediate compartment, where it participates in virus particle assembly. Some S oligomers may be transported to the plasma membrane, where they may mediate cell-cell fusion. S1 is not anchored to the viral envelope, but associates with the extravirion surface through its binding to S2.</text>
</comment>
<comment type="domain">
    <text evidence="1">The di-lysine motif confers endoplasmic reticulum localization for type I membrane proteins.</text>
</comment>
<comment type="PTM">
    <text evidence="1 6">Specific enzymatic cleavages in vivo yield mature proteins. The precursor is processed into S1 and S2 by host cell furin or furin-like protease to yield the mature S1 and S2 proteins. The cleavage site between S1 and S2 requires the optimal sequence [KR]-X-[KR]-R. Additionally, a second cleavage leads to the release of a fusion peptide after viral attachment to host cell receptor.</text>
</comment>
<comment type="similarity">
    <text evidence="1">Belongs to the gammacoronaviruses spike protein family.</text>
</comment>
<organismHost>
    <name type="scientific">Gallus gallus</name>
    <name type="common">Chicken</name>
    <dbReference type="NCBI Taxonomy" id="9031"/>
</organismHost>
<feature type="signal peptide" evidence="1">
    <location>
        <begin position="1"/>
        <end position="18"/>
    </location>
</feature>
<feature type="chain" id="PRO_0000037162" description="Spike glycoprotein" evidence="1">
    <location>
        <begin position="19"/>
        <end position="1162"/>
    </location>
</feature>
<feature type="chain" id="PRO_0000037163" description="Spike protein S1" evidence="1 8">
    <location>
        <begin position="19"/>
        <end position="537"/>
    </location>
</feature>
<feature type="chain" id="PRO_0000037164" description="Spike protein S2" evidence="1 8">
    <location>
        <begin position="538"/>
        <end position="1162"/>
    </location>
</feature>
<feature type="chain" id="PRO_0000444092" description="Spike protein S2'" evidence="1 8">
    <location>
        <begin position="691"/>
        <end position="1162"/>
    </location>
</feature>
<feature type="topological domain" description="Extracellular" evidence="1">
    <location>
        <begin position="19"/>
        <end position="1095"/>
    </location>
</feature>
<feature type="transmembrane region" description="Helical" evidence="1">
    <location>
        <begin position="1096"/>
        <end position="1116"/>
    </location>
</feature>
<feature type="topological domain" description="Cytoplasmic" evidence="1">
    <location>
        <begin position="1117"/>
        <end position="1162"/>
    </location>
</feature>
<feature type="region of interest" description="Heptad repeat 1 (HR1)" evidence="2">
    <location>
        <begin position="769"/>
        <end position="874"/>
    </location>
</feature>
<feature type="region of interest" description="Heptad repeat 2 (HR2)" evidence="3">
    <location>
        <begin position="1024"/>
        <end position="1105"/>
    </location>
</feature>
<feature type="coiled-coil region" evidence="1">
    <location>
        <begin position="822"/>
        <end position="866"/>
    </location>
</feature>
<feature type="coiled-coil region" evidence="1">
    <location>
        <begin position="1055"/>
        <end position="1083"/>
    </location>
</feature>
<feature type="short sequence motif" description="Di-lysine motif" evidence="1">
    <location>
        <begin position="1159"/>
        <end position="1162"/>
    </location>
</feature>
<feature type="site" description="Cleavage; by host furin" evidence="1 6">
    <location>
        <begin position="537"/>
        <end position="538"/>
    </location>
</feature>
<feature type="site" description="Cleavage; by host furin" evidence="1 6">
    <location>
        <begin position="690"/>
        <end position="691"/>
    </location>
</feature>
<feature type="glycosylation site" description="N-linked (GlcNAc...) asparagine; by host" evidence="1">
    <location>
        <position position="51"/>
    </location>
</feature>
<feature type="glycosylation site" description="N-linked (GlcNAc...) asparagine; by host" evidence="1">
    <location>
        <position position="77"/>
    </location>
</feature>
<feature type="glycosylation site" description="N-linked (GlcNAc...) asparagine; by host" evidence="1">
    <location>
        <position position="103"/>
    </location>
</feature>
<feature type="glycosylation site" description="N-linked (GlcNAc...) asparagine; by host" evidence="1">
    <location>
        <position position="144"/>
    </location>
</feature>
<feature type="glycosylation site" description="N-linked (GlcNAc...) asparagine; by host" evidence="1">
    <location>
        <position position="163"/>
    </location>
</feature>
<feature type="glycosylation site" description="N-linked (GlcNAc...) asparagine; by host" evidence="1">
    <location>
        <position position="178"/>
    </location>
</feature>
<feature type="glycosylation site" description="N-linked (GlcNAc...) asparagine; by host" evidence="1 8">
    <location>
        <position position="212"/>
    </location>
</feature>
<feature type="glycosylation site" description="N-linked (GlcNAc...) asparagine; by host" evidence="1 8">
    <location>
        <position position="237"/>
    </location>
</feature>
<feature type="glycosylation site" description="N-linked (GlcNAc...) asparagine; by host" evidence="1 8">
    <location>
        <position position="247"/>
    </location>
</feature>
<feature type="glycosylation site" description="N-linked (GlcNAc...) asparagine; by host" evidence="1">
    <location>
        <position position="264"/>
    </location>
</feature>
<feature type="glycosylation site" description="N-linked (GlcNAc...) asparagine; by host" evidence="1 8">
    <location>
        <position position="276"/>
    </location>
</feature>
<feature type="glycosylation site" description="N-linked (GlcNAc...) asparagine; by host" evidence="1">
    <location>
        <position position="306"/>
    </location>
</feature>
<feature type="glycosylation site" description="N-linked (GlcNAc...) asparagine; by host" evidence="1">
    <location>
        <position position="425"/>
    </location>
</feature>
<feature type="glycosylation site" description="N-linked (GlcNAc...) asparagine; by host" evidence="1">
    <location>
        <position position="447"/>
    </location>
</feature>
<feature type="glycosylation site" description="N-linked (GlcNAc...) asparagine; by host" evidence="1 8">
    <location>
        <position position="513"/>
    </location>
</feature>
<feature type="glycosylation site" description="N-linked (GlcNAc...) asparagine; by host" evidence="1">
    <location>
        <position position="530"/>
    </location>
</feature>
<feature type="glycosylation site" description="N-linked (GlcNAc...) asparagine; by host" evidence="1">
    <location>
        <position position="579"/>
    </location>
</feature>
<feature type="glycosylation site" description="N-linked (GlcNAc...) asparagine; by host" evidence="1 8">
    <location>
        <position position="591"/>
    </location>
</feature>
<feature type="glycosylation site" description="N-linked (GlcNAc...) asparagine; by host" evidence="1">
    <location>
        <position position="669"/>
    </location>
</feature>
<feature type="glycosylation site" description="N-linked (GlcNAc...) asparagine; by host" evidence="1">
    <location>
        <position position="676"/>
    </location>
</feature>
<feature type="glycosylation site" description="N-linked (GlcNAc...) asparagine; by host" evidence="1">
    <location>
        <position position="714"/>
    </location>
</feature>
<feature type="glycosylation site" description="N-linked (GlcNAc...) asparagine; by host" evidence="1">
    <location>
        <position position="947"/>
    </location>
</feature>
<feature type="glycosylation site" description="N-linked (GlcNAc...) asparagine; by host" evidence="1">
    <location>
        <position position="960"/>
    </location>
</feature>
<feature type="glycosylation site" description="N-linked (GlcNAc...) asparagine; by host" evidence="1">
    <location>
        <position position="979"/>
    </location>
</feature>
<feature type="glycosylation site" description="N-linked (GlcNAc...) asparagine; by host" evidence="1">
    <location>
        <position position="1014"/>
    </location>
</feature>
<feature type="glycosylation site" description="N-linked (GlcNAc...) asparagine; by host" evidence="1">
    <location>
        <position position="1038"/>
    </location>
</feature>
<feature type="glycosylation site" description="N-linked (GlcNAc...) asparagine; by host" evidence="1 8">
    <location>
        <position position="1051"/>
    </location>
</feature>
<feature type="glycosylation site" description="N-linked (GlcNAc...) asparagine; by host" evidence="1 8">
    <location>
        <position position="1074"/>
    </location>
</feature>
<feature type="sequence variant" description="In strain: Isolate Vero cell-adapted p36 and Isolate Vero cell-adapted p65.">
    <original>L</original>
    <variation>I</variation>
    <location>
        <position position="122"/>
    </location>
</feature>
<feature type="sequence variant" description="In strain: Isolate Vero cell-adapted p36 and Isolate Vero cell-adapted p65.">
    <original>L</original>
    <variation>F</variation>
    <location>
        <position position="130"/>
    </location>
</feature>
<feature type="sequence variant" description="In strain: Isolate Vero cell-adapted p36 and Isolate Vero cell-adapted p65.">
    <original>K</original>
    <variation>R</variation>
    <location>
        <position position="364"/>
    </location>
</feature>
<feature type="sequence variant" description="In strain: Isolate Vero cell-adapted p36 and Isolate Vero cell-adapted p65.">
    <original>G</original>
    <variation>D</variation>
    <location>
        <position position="405"/>
    </location>
</feature>
<feature type="sequence variant" description="In strain: Isolate Vero cell-adapted p36 and Isolate Vero cell-adapted p65.">
    <original>N</original>
    <variation>H</variation>
    <location>
        <position position="421"/>
    </location>
</feature>
<feature type="sequence variant" description="In strain: Isolate Vero cell-adapted p36 and Isolate Vero cell-adapted p65.">
    <original>K</original>
    <variation>N</variation>
    <location>
        <position position="623"/>
    </location>
</feature>
<feature type="sequence variant" description="In strain: Isolate Vero cell-adapted p36 and Isolate Vero cell-adapted p65.">
    <original>N</original>
    <variation>T</variation>
    <location>
        <position position="683"/>
    </location>
</feature>
<feature type="sequence variant" description="In strain: Isolate Vero cell-adapted p36 and Isolate Vero cell-adapted p65.">
    <original>K</original>
    <variation>R</variation>
    <location>
        <position position="689"/>
    </location>
</feature>
<feature type="sequence variant" description="In strain: Isolate Vero cell-adapted p36 and Isolate Vero cell-adapted p65.">
    <original>L</original>
    <variation>V</variation>
    <location>
        <position position="692"/>
    </location>
</feature>
<feature type="sequence variant" description="In strain: Isolate Vero cell-adapted p36 and Isolate Vero cell-adapted p65.">
    <original>N</original>
    <variation>D</variation>
    <location>
        <position position="709"/>
    </location>
</feature>
<feature type="sequence variant" description="In strain: Isolate Vero cell-adapted p36 and Isolate Vero cell-adapted p65.">
    <original>F</original>
    <variation>L</variation>
    <location>
        <position position="723"/>
    </location>
</feature>
<feature type="sequence variant" description="In strain: Isolate Vero cell-adapted p36 and Isolate Vero cell-adapted p65.">
    <original>S</original>
    <variation>I</variation>
    <location>
        <position position="1012"/>
    </location>
</feature>
<feature type="mutagenesis site" description="Localizes exclusively to the cell membrane." evidence="4">
    <original>K</original>
    <variation>A</variation>
    <location>
        <position position="1159"/>
    </location>
</feature>
<feature type="mutagenesis site" description="Localizes exclusively to the cell membrane." evidence="4">
    <original>K</original>
    <variation>A</variation>
    <location>
        <position position="1160"/>
    </location>
</feature>